<name>DUT_NEOSM</name>
<comment type="function">
    <text evidence="1">This enzyme is involved in nucleotide metabolism: it produces dUMP, the immediate precursor of thymidine nucleotides and it decreases the intracellular concentration of dUTP so that uracil cannot be incorporated into DNA.</text>
</comment>
<comment type="catalytic activity">
    <reaction evidence="1">
        <text>dUTP + H2O = dUMP + diphosphate + H(+)</text>
        <dbReference type="Rhea" id="RHEA:10248"/>
        <dbReference type="ChEBI" id="CHEBI:15377"/>
        <dbReference type="ChEBI" id="CHEBI:15378"/>
        <dbReference type="ChEBI" id="CHEBI:33019"/>
        <dbReference type="ChEBI" id="CHEBI:61555"/>
        <dbReference type="ChEBI" id="CHEBI:246422"/>
        <dbReference type="EC" id="3.6.1.23"/>
    </reaction>
</comment>
<comment type="cofactor">
    <cofactor evidence="1">
        <name>Mg(2+)</name>
        <dbReference type="ChEBI" id="CHEBI:18420"/>
    </cofactor>
</comment>
<comment type="pathway">
    <text evidence="1">Pyrimidine metabolism; dUMP biosynthesis; dUMP from dCTP (dUTP route): step 2/2.</text>
</comment>
<comment type="similarity">
    <text evidence="1">Belongs to the dUTPase family.</text>
</comment>
<keyword id="KW-0378">Hydrolase</keyword>
<keyword id="KW-0460">Magnesium</keyword>
<keyword id="KW-0479">Metal-binding</keyword>
<keyword id="KW-0546">Nucleotide metabolism</keyword>
<organism>
    <name type="scientific">Neorickettsia sennetsu (strain ATCC VR-367 / Miyayama)</name>
    <name type="common">Ehrlichia sennetsu</name>
    <dbReference type="NCBI Taxonomy" id="222891"/>
    <lineage>
        <taxon>Bacteria</taxon>
        <taxon>Pseudomonadati</taxon>
        <taxon>Pseudomonadota</taxon>
        <taxon>Alphaproteobacteria</taxon>
        <taxon>Rickettsiales</taxon>
        <taxon>Anaplasmataceae</taxon>
        <taxon>Neorickettsia</taxon>
    </lineage>
</organism>
<gene>
    <name evidence="1" type="primary">dut</name>
    <name type="ordered locus">NSE_0957</name>
</gene>
<feature type="chain" id="PRO_1000094973" description="Deoxyuridine 5'-triphosphate nucleotidohydrolase">
    <location>
        <begin position="1"/>
        <end position="149"/>
    </location>
</feature>
<feature type="binding site" evidence="1">
    <location>
        <begin position="68"/>
        <end position="70"/>
    </location>
    <ligand>
        <name>substrate</name>
    </ligand>
</feature>
<feature type="binding site" evidence="1">
    <location>
        <position position="81"/>
    </location>
    <ligand>
        <name>substrate</name>
    </ligand>
</feature>
<feature type="binding site" evidence="1">
    <location>
        <begin position="85"/>
        <end position="87"/>
    </location>
    <ligand>
        <name>substrate</name>
    </ligand>
</feature>
<feature type="binding site" evidence="1">
    <location>
        <position position="95"/>
    </location>
    <ligand>
        <name>substrate</name>
    </ligand>
</feature>
<accession>Q2GCH5</accession>
<dbReference type="EC" id="3.6.1.23" evidence="1"/>
<dbReference type="EMBL" id="CP000237">
    <property type="protein sequence ID" value="ABD46095.1"/>
    <property type="molecule type" value="Genomic_DNA"/>
</dbReference>
<dbReference type="RefSeq" id="WP_011452327.1">
    <property type="nucleotide sequence ID" value="NC_007798.1"/>
</dbReference>
<dbReference type="SMR" id="Q2GCH5"/>
<dbReference type="STRING" id="222891.NSE_0957"/>
<dbReference type="KEGG" id="nse:NSE_0957"/>
<dbReference type="eggNOG" id="COG0756">
    <property type="taxonomic scope" value="Bacteria"/>
</dbReference>
<dbReference type="HOGENOM" id="CLU_068508_1_2_5"/>
<dbReference type="OrthoDB" id="9809956at2"/>
<dbReference type="UniPathway" id="UPA00610">
    <property type="reaction ID" value="UER00666"/>
</dbReference>
<dbReference type="Proteomes" id="UP000001942">
    <property type="component" value="Chromosome"/>
</dbReference>
<dbReference type="GO" id="GO:0004170">
    <property type="term" value="F:dUTP diphosphatase activity"/>
    <property type="evidence" value="ECO:0007669"/>
    <property type="project" value="UniProtKB-UniRule"/>
</dbReference>
<dbReference type="GO" id="GO:0000287">
    <property type="term" value="F:magnesium ion binding"/>
    <property type="evidence" value="ECO:0007669"/>
    <property type="project" value="UniProtKB-UniRule"/>
</dbReference>
<dbReference type="GO" id="GO:0006226">
    <property type="term" value="P:dUMP biosynthetic process"/>
    <property type="evidence" value="ECO:0007669"/>
    <property type="project" value="UniProtKB-UniRule"/>
</dbReference>
<dbReference type="GO" id="GO:0046081">
    <property type="term" value="P:dUTP catabolic process"/>
    <property type="evidence" value="ECO:0007669"/>
    <property type="project" value="InterPro"/>
</dbReference>
<dbReference type="CDD" id="cd07557">
    <property type="entry name" value="trimeric_dUTPase"/>
    <property type="match status" value="1"/>
</dbReference>
<dbReference type="Gene3D" id="2.70.40.10">
    <property type="match status" value="1"/>
</dbReference>
<dbReference type="HAMAP" id="MF_00116">
    <property type="entry name" value="dUTPase_bact"/>
    <property type="match status" value="1"/>
</dbReference>
<dbReference type="InterPro" id="IPR008181">
    <property type="entry name" value="dUTPase"/>
</dbReference>
<dbReference type="InterPro" id="IPR029054">
    <property type="entry name" value="dUTPase-like"/>
</dbReference>
<dbReference type="InterPro" id="IPR036157">
    <property type="entry name" value="dUTPase-like_sf"/>
</dbReference>
<dbReference type="InterPro" id="IPR033704">
    <property type="entry name" value="dUTPase_trimeric"/>
</dbReference>
<dbReference type="NCBIfam" id="TIGR00576">
    <property type="entry name" value="dut"/>
    <property type="match status" value="1"/>
</dbReference>
<dbReference type="NCBIfam" id="NF001862">
    <property type="entry name" value="PRK00601.1"/>
    <property type="match status" value="1"/>
</dbReference>
<dbReference type="PANTHER" id="PTHR11241">
    <property type="entry name" value="DEOXYURIDINE 5'-TRIPHOSPHATE NUCLEOTIDOHYDROLASE"/>
    <property type="match status" value="1"/>
</dbReference>
<dbReference type="PANTHER" id="PTHR11241:SF0">
    <property type="entry name" value="DEOXYURIDINE 5'-TRIPHOSPHATE NUCLEOTIDOHYDROLASE"/>
    <property type="match status" value="1"/>
</dbReference>
<dbReference type="Pfam" id="PF00692">
    <property type="entry name" value="dUTPase"/>
    <property type="match status" value="1"/>
</dbReference>
<dbReference type="SUPFAM" id="SSF51283">
    <property type="entry name" value="dUTPase-like"/>
    <property type="match status" value="1"/>
</dbReference>
<protein>
    <recommendedName>
        <fullName evidence="1">Deoxyuridine 5'-triphosphate nucleotidohydrolase</fullName>
        <shortName evidence="1">dUTPase</shortName>
        <ecNumber evidence="1">3.6.1.23</ecNumber>
    </recommendedName>
    <alternativeName>
        <fullName evidence="1">dUTP pyrophosphatase</fullName>
    </alternativeName>
</protein>
<reference key="1">
    <citation type="journal article" date="2006" name="PLoS Genet.">
        <title>Comparative genomics of emerging human ehrlichiosis agents.</title>
        <authorList>
            <person name="Dunning Hotopp J.C."/>
            <person name="Lin M."/>
            <person name="Madupu R."/>
            <person name="Crabtree J."/>
            <person name="Angiuoli S.V."/>
            <person name="Eisen J.A."/>
            <person name="Seshadri R."/>
            <person name="Ren Q."/>
            <person name="Wu M."/>
            <person name="Utterback T.R."/>
            <person name="Smith S."/>
            <person name="Lewis M."/>
            <person name="Khouri H."/>
            <person name="Zhang C."/>
            <person name="Niu H."/>
            <person name="Lin Q."/>
            <person name="Ohashi N."/>
            <person name="Zhi N."/>
            <person name="Nelson W.C."/>
            <person name="Brinkac L.M."/>
            <person name="Dodson R.J."/>
            <person name="Rosovitz M.J."/>
            <person name="Sundaram J.P."/>
            <person name="Daugherty S.C."/>
            <person name="Davidsen T."/>
            <person name="Durkin A.S."/>
            <person name="Gwinn M.L."/>
            <person name="Haft D.H."/>
            <person name="Selengut J.D."/>
            <person name="Sullivan S.A."/>
            <person name="Zafar N."/>
            <person name="Zhou L."/>
            <person name="Benahmed F."/>
            <person name="Forberger H."/>
            <person name="Halpin R."/>
            <person name="Mulligan S."/>
            <person name="Robinson J."/>
            <person name="White O."/>
            <person name="Rikihisa Y."/>
            <person name="Tettelin H."/>
        </authorList>
    </citation>
    <scope>NUCLEOTIDE SEQUENCE [LARGE SCALE GENOMIC DNA]</scope>
    <source>
        <strain>ATCC VR-367 / Miyayama</strain>
    </source>
</reference>
<proteinExistence type="inferred from homology"/>
<evidence type="ECO:0000255" key="1">
    <source>
        <dbReference type="HAMAP-Rule" id="MF_00116"/>
    </source>
</evidence>
<sequence length="149" mass="16080">MQEHAKILLLPHGKDLEIPRYASKGSSGLDLRAAIEGSMTLKPGMFELVPTGICIELPEGLEAQIRPRSGLAAKFGITVLNSPGTVDQDYRGEIKVCLVNLSKNEFTINRGDRIAQMVIAKVEQILLVEAEEIGETERASGSFGSTGTE</sequence>